<comment type="function">
    <text evidence="2">Involved in the regulation of expression of DegU-controlled genes (PubMed:12950930). Inhibits the binding of DegU to the promoter regions of aprE, coding for an extracellular alkaline protease, and comK, a master regulator for development of genetic competence (PubMed:12950930). RapG does not stimulate dephosphorylation of DegU-P (PubMed:12950930).</text>
</comment>
<comment type="activity regulation">
    <text evidence="2">Inhibited by PhrG.</text>
</comment>
<comment type="subcellular location">
    <subcellularLocation>
        <location evidence="4">Cytoplasm</location>
    </subcellularLocation>
</comment>
<comment type="induction">
    <text evidence="2 3">Part of the rapG-phrG operon (PubMed:12950930). Expression shows a slight decrease in stationary phase (PubMed:12950930). Repressed by RghR (PubMed:16553878).</text>
</comment>
<comment type="disruption phenotype">
    <text evidence="2">Disruption of the gene results in the enhancement of aprE expression.</text>
</comment>
<comment type="similarity">
    <text evidence="4">Belongs to the Rap family.</text>
</comment>
<keyword id="KW-0963">Cytoplasm</keyword>
<keyword id="KW-1185">Reference proteome</keyword>
<keyword id="KW-0677">Repeat</keyword>
<keyword id="KW-0802">TPR repeat</keyword>
<reference key="1">
    <citation type="journal article" date="1997" name="Nature">
        <title>The complete genome sequence of the Gram-positive bacterium Bacillus subtilis.</title>
        <authorList>
            <person name="Kunst F."/>
            <person name="Ogasawara N."/>
            <person name="Moszer I."/>
            <person name="Albertini A.M."/>
            <person name="Alloni G."/>
            <person name="Azevedo V."/>
            <person name="Bertero M.G."/>
            <person name="Bessieres P."/>
            <person name="Bolotin A."/>
            <person name="Borchert S."/>
            <person name="Borriss R."/>
            <person name="Boursier L."/>
            <person name="Brans A."/>
            <person name="Braun M."/>
            <person name="Brignell S.C."/>
            <person name="Bron S."/>
            <person name="Brouillet S."/>
            <person name="Bruschi C.V."/>
            <person name="Caldwell B."/>
            <person name="Capuano V."/>
            <person name="Carter N.M."/>
            <person name="Choi S.-K."/>
            <person name="Codani J.-J."/>
            <person name="Connerton I.F."/>
            <person name="Cummings N.J."/>
            <person name="Daniel R.A."/>
            <person name="Denizot F."/>
            <person name="Devine K.M."/>
            <person name="Duesterhoeft A."/>
            <person name="Ehrlich S.D."/>
            <person name="Emmerson P.T."/>
            <person name="Entian K.-D."/>
            <person name="Errington J."/>
            <person name="Fabret C."/>
            <person name="Ferrari E."/>
            <person name="Foulger D."/>
            <person name="Fritz C."/>
            <person name="Fujita M."/>
            <person name="Fujita Y."/>
            <person name="Fuma S."/>
            <person name="Galizzi A."/>
            <person name="Galleron N."/>
            <person name="Ghim S.-Y."/>
            <person name="Glaser P."/>
            <person name="Goffeau A."/>
            <person name="Golightly E.J."/>
            <person name="Grandi G."/>
            <person name="Guiseppi G."/>
            <person name="Guy B.J."/>
            <person name="Haga K."/>
            <person name="Haiech J."/>
            <person name="Harwood C.R."/>
            <person name="Henaut A."/>
            <person name="Hilbert H."/>
            <person name="Holsappel S."/>
            <person name="Hosono S."/>
            <person name="Hullo M.-F."/>
            <person name="Itaya M."/>
            <person name="Jones L.-M."/>
            <person name="Joris B."/>
            <person name="Karamata D."/>
            <person name="Kasahara Y."/>
            <person name="Klaerr-Blanchard M."/>
            <person name="Klein C."/>
            <person name="Kobayashi Y."/>
            <person name="Koetter P."/>
            <person name="Koningstein G."/>
            <person name="Krogh S."/>
            <person name="Kumano M."/>
            <person name="Kurita K."/>
            <person name="Lapidus A."/>
            <person name="Lardinois S."/>
            <person name="Lauber J."/>
            <person name="Lazarevic V."/>
            <person name="Lee S.-M."/>
            <person name="Levine A."/>
            <person name="Liu H."/>
            <person name="Masuda S."/>
            <person name="Mauel C."/>
            <person name="Medigue C."/>
            <person name="Medina N."/>
            <person name="Mellado R.P."/>
            <person name="Mizuno M."/>
            <person name="Moestl D."/>
            <person name="Nakai S."/>
            <person name="Noback M."/>
            <person name="Noone D."/>
            <person name="O'Reilly M."/>
            <person name="Ogawa K."/>
            <person name="Ogiwara A."/>
            <person name="Oudega B."/>
            <person name="Park S.-H."/>
            <person name="Parro V."/>
            <person name="Pohl T.M."/>
            <person name="Portetelle D."/>
            <person name="Porwollik S."/>
            <person name="Prescott A.M."/>
            <person name="Presecan E."/>
            <person name="Pujic P."/>
            <person name="Purnelle B."/>
            <person name="Rapoport G."/>
            <person name="Rey M."/>
            <person name="Reynolds S."/>
            <person name="Rieger M."/>
            <person name="Rivolta C."/>
            <person name="Rocha E."/>
            <person name="Roche B."/>
            <person name="Rose M."/>
            <person name="Sadaie Y."/>
            <person name="Sato T."/>
            <person name="Scanlan E."/>
            <person name="Schleich S."/>
            <person name="Schroeter R."/>
            <person name="Scoffone F."/>
            <person name="Sekiguchi J."/>
            <person name="Sekowska A."/>
            <person name="Seror S.J."/>
            <person name="Serror P."/>
            <person name="Shin B.-S."/>
            <person name="Soldo B."/>
            <person name="Sorokin A."/>
            <person name="Tacconi E."/>
            <person name="Takagi T."/>
            <person name="Takahashi H."/>
            <person name="Takemaru K."/>
            <person name="Takeuchi M."/>
            <person name="Tamakoshi A."/>
            <person name="Tanaka T."/>
            <person name="Terpstra P."/>
            <person name="Tognoni A."/>
            <person name="Tosato V."/>
            <person name="Uchiyama S."/>
            <person name="Vandenbol M."/>
            <person name="Vannier F."/>
            <person name="Vassarotti A."/>
            <person name="Viari A."/>
            <person name="Wambutt R."/>
            <person name="Wedler E."/>
            <person name="Wedler H."/>
            <person name="Weitzenegger T."/>
            <person name="Winters P."/>
            <person name="Wipat A."/>
            <person name="Yamamoto H."/>
            <person name="Yamane K."/>
            <person name="Yasumoto K."/>
            <person name="Yata K."/>
            <person name="Yoshida K."/>
            <person name="Yoshikawa H.-F."/>
            <person name="Zumstein E."/>
            <person name="Yoshikawa H."/>
            <person name="Danchin A."/>
        </authorList>
    </citation>
    <scope>NUCLEOTIDE SEQUENCE [LARGE SCALE GENOMIC DNA]</scope>
    <source>
        <strain>168</strain>
    </source>
</reference>
<reference key="2">
    <citation type="journal article" date="2003" name="Mol. Microbiol.">
        <title>Binding of response regulator DegU to the aprE promoter is inhibited by RapG, which is counteracted by extracellular PhrG in Bacillus subtilis.</title>
        <authorList>
            <person name="Ogura M."/>
            <person name="Shimane K."/>
            <person name="Asai K."/>
            <person name="Ogasawara N."/>
            <person name="Tanaka T."/>
        </authorList>
    </citation>
    <scope>FUNCTION</scope>
    <scope>ACTIVITY REGULATION</scope>
    <scope>INDUCTION</scope>
    <scope>DISRUPTION PHENOTYPE</scope>
</reference>
<reference key="3">
    <citation type="journal article" date="2006" name="Mol. Microbiol.">
        <title>Bacillus subtilis RghR (YvaN) represses rapG and rapH, which encode inhibitors of expression of the srfA operon.</title>
        <authorList>
            <person name="Hayashi K."/>
            <person name="Kensuke T."/>
            <person name="Kobayashi K."/>
            <person name="Ogasawara N."/>
            <person name="Ogura M."/>
        </authorList>
    </citation>
    <scope>REPRESSION BY RGHR</scope>
    <source>
        <strain>168</strain>
    </source>
</reference>
<sequence length="365" mass="42842">MNKIAPAEIASMLNDWYLAIKKHEVEESSRLFEEVKPLLDDMEEDQEVLAYFSLLELRHKVLLHEARGQGFQHEEPSHMNATSDMLKYYFFLFEGMYEAYKNNYDIAIGLYKDAEQYLDNIPDPIEKAEFHLKVGKLYYKLGQNIVSLNHTRQAVKTFREETDYKKKLASALITMSGNFTEMSQFEEAEAYLDEAIRITSELEDHFFEAQLLHNFGLLHAQSGKSEEAVSKLEEALQNDEYARSAYYYHSAYLLIRELFKIKKKEQALSYYQDVKEKLTAEPNRICEAKIDILYAIYAEGGHAETFHLCKQHMDDLLSEKEYDSVRELSILAGERYRELELYKEAAHFFYEALQIEELIKRTEVI</sequence>
<organism>
    <name type="scientific">Bacillus subtilis (strain 168)</name>
    <dbReference type="NCBI Taxonomy" id="224308"/>
    <lineage>
        <taxon>Bacteria</taxon>
        <taxon>Bacillati</taxon>
        <taxon>Bacillota</taxon>
        <taxon>Bacilli</taxon>
        <taxon>Bacillales</taxon>
        <taxon>Bacillaceae</taxon>
        <taxon>Bacillus</taxon>
    </lineage>
</organism>
<gene>
    <name type="primary">rapG</name>
    <name type="synonym">yycM</name>
    <name type="ordered locus">BSU40300</name>
</gene>
<accession>O32294</accession>
<dbReference type="EMBL" id="AL009126">
    <property type="protein sequence ID" value="CAB16067.1"/>
    <property type="molecule type" value="Genomic_DNA"/>
</dbReference>
<dbReference type="PIR" id="B69689">
    <property type="entry name" value="B69689"/>
</dbReference>
<dbReference type="RefSeq" id="NP_391910.1">
    <property type="nucleotide sequence ID" value="NC_000964.3"/>
</dbReference>
<dbReference type="RefSeq" id="WP_003243386.1">
    <property type="nucleotide sequence ID" value="NZ_OZ025638.1"/>
</dbReference>
<dbReference type="SMR" id="O32294"/>
<dbReference type="FunCoup" id="O32294">
    <property type="interactions" value="72"/>
</dbReference>
<dbReference type="STRING" id="224308.BSU40300"/>
<dbReference type="jPOST" id="O32294"/>
<dbReference type="PaxDb" id="224308-BSU40300"/>
<dbReference type="EnsemblBacteria" id="CAB16067">
    <property type="protein sequence ID" value="CAB16067"/>
    <property type="gene ID" value="BSU_40300"/>
</dbReference>
<dbReference type="GeneID" id="937771"/>
<dbReference type="KEGG" id="bsu:BSU40300"/>
<dbReference type="PATRIC" id="fig|224308.179.peg.4360"/>
<dbReference type="eggNOG" id="COG0457">
    <property type="taxonomic scope" value="Bacteria"/>
</dbReference>
<dbReference type="InParanoid" id="O32294"/>
<dbReference type="OrthoDB" id="2957368at2"/>
<dbReference type="PhylomeDB" id="O32294"/>
<dbReference type="BioCyc" id="BSUB:BSU40300-MONOMER"/>
<dbReference type="Proteomes" id="UP000001570">
    <property type="component" value="Chromosome"/>
</dbReference>
<dbReference type="GO" id="GO:0005737">
    <property type="term" value="C:cytoplasm"/>
    <property type="evidence" value="ECO:0007669"/>
    <property type="project" value="UniProtKB-SubCell"/>
</dbReference>
<dbReference type="Gene3D" id="1.25.40.10">
    <property type="entry name" value="Tetratricopeptide repeat domain"/>
    <property type="match status" value="1"/>
</dbReference>
<dbReference type="InterPro" id="IPR052346">
    <property type="entry name" value="O-mannosyl-transferase_TMTC"/>
</dbReference>
<dbReference type="InterPro" id="IPR011990">
    <property type="entry name" value="TPR-like_helical_dom_sf"/>
</dbReference>
<dbReference type="InterPro" id="IPR019734">
    <property type="entry name" value="TPR_rpt"/>
</dbReference>
<dbReference type="PANTHER" id="PTHR44227">
    <property type="match status" value="1"/>
</dbReference>
<dbReference type="PANTHER" id="PTHR44227:SF3">
    <property type="entry name" value="PROTEIN O-MANNOSYL-TRANSFERASE TMTC4"/>
    <property type="match status" value="1"/>
</dbReference>
<dbReference type="Pfam" id="PF18801">
    <property type="entry name" value="RapH_N"/>
    <property type="match status" value="1"/>
</dbReference>
<dbReference type="Pfam" id="PF13424">
    <property type="entry name" value="TPR_12"/>
    <property type="match status" value="1"/>
</dbReference>
<dbReference type="SUPFAM" id="SSF48452">
    <property type="entry name" value="TPR-like"/>
    <property type="match status" value="1"/>
</dbReference>
<dbReference type="PROSITE" id="PS50005">
    <property type="entry name" value="TPR"/>
    <property type="match status" value="4"/>
</dbReference>
<dbReference type="PROSITE" id="PS50293">
    <property type="entry name" value="TPR_REGION"/>
    <property type="match status" value="1"/>
</dbReference>
<protein>
    <recommendedName>
        <fullName evidence="4">Regulatory protein RapG</fullName>
    </recommendedName>
</protein>
<evidence type="ECO:0000255" key="1"/>
<evidence type="ECO:0000269" key="2">
    <source>
    </source>
</evidence>
<evidence type="ECO:0000269" key="3">
    <source>
    </source>
</evidence>
<evidence type="ECO:0000305" key="4"/>
<name>RAPG_BACSU</name>
<feature type="chain" id="PRO_0000106441" description="Regulatory protein RapG">
    <location>
        <begin position="1"/>
        <end position="365"/>
    </location>
</feature>
<feature type="repeat" description="TPR 1" evidence="1">
    <location>
        <begin position="135"/>
        <end position="168"/>
    </location>
</feature>
<feature type="repeat" description="TPR 2" evidence="1">
    <location>
        <begin position="169"/>
        <end position="202"/>
    </location>
</feature>
<feature type="repeat" description="TPR 3" evidence="1">
    <location>
        <begin position="209"/>
        <end position="242"/>
    </location>
</feature>
<feature type="repeat" description="TPR 4" evidence="1">
    <location>
        <begin position="244"/>
        <end position="284"/>
    </location>
</feature>
<feature type="repeat" description="TPR 5" evidence="1">
    <location>
        <begin position="326"/>
        <end position="359"/>
    </location>
</feature>
<proteinExistence type="evidence at transcript level"/>